<sequence>MTTDTHTLHIEEILDLLPHRFPFLLVDRVLDFEEGKFLRAVKNVSFNEPFFQGHFPGKPIFPGVLILEAMAQATGILAFKSRGKLEPGELYYFAGIDEARFKRPVVPGDQMIMEVEFVKERRGLTRFTGVAKVDGEIVCTATMMCARSKPAAPAESVVVKPDVVKPDVVNPVVKES</sequence>
<comment type="function">
    <text evidence="1">Involved in unsaturated fatty acids biosynthesis. Catalyzes the dehydration of short chain beta-hydroxyacyl-ACPs and long chain saturated and unsaturated beta-hydroxyacyl-ACPs.</text>
</comment>
<comment type="catalytic activity">
    <reaction evidence="1">
        <text>a (3R)-hydroxyacyl-[ACP] = a (2E)-enoyl-[ACP] + H2O</text>
        <dbReference type="Rhea" id="RHEA:13097"/>
        <dbReference type="Rhea" id="RHEA-COMP:9925"/>
        <dbReference type="Rhea" id="RHEA-COMP:9945"/>
        <dbReference type="ChEBI" id="CHEBI:15377"/>
        <dbReference type="ChEBI" id="CHEBI:78784"/>
        <dbReference type="ChEBI" id="CHEBI:78827"/>
        <dbReference type="EC" id="4.2.1.59"/>
    </reaction>
</comment>
<comment type="subcellular location">
    <subcellularLocation>
        <location evidence="1">Cytoplasm</location>
    </subcellularLocation>
</comment>
<comment type="similarity">
    <text evidence="1">Belongs to the thioester dehydratase family. FabZ subfamily.</text>
</comment>
<proteinExistence type="inferred from homology"/>
<dbReference type="EC" id="4.2.1.59" evidence="1"/>
<dbReference type="EMBL" id="CP001048">
    <property type="protein sequence ID" value="ACC90067.1"/>
    <property type="molecule type" value="Genomic_DNA"/>
</dbReference>
<dbReference type="RefSeq" id="WP_002217656.1">
    <property type="nucleotide sequence ID" value="NZ_CP009780.1"/>
</dbReference>
<dbReference type="SMR" id="B2JZ23"/>
<dbReference type="KEGG" id="ypb:YPTS_3112"/>
<dbReference type="PATRIC" id="fig|502801.10.peg.2544"/>
<dbReference type="GO" id="GO:0005737">
    <property type="term" value="C:cytoplasm"/>
    <property type="evidence" value="ECO:0007669"/>
    <property type="project" value="UniProtKB-SubCell"/>
</dbReference>
<dbReference type="GO" id="GO:0016020">
    <property type="term" value="C:membrane"/>
    <property type="evidence" value="ECO:0007669"/>
    <property type="project" value="GOC"/>
</dbReference>
<dbReference type="GO" id="GO:0019171">
    <property type="term" value="F:(3R)-hydroxyacyl-[acyl-carrier-protein] dehydratase activity"/>
    <property type="evidence" value="ECO:0007669"/>
    <property type="project" value="UniProtKB-EC"/>
</dbReference>
<dbReference type="GO" id="GO:0006633">
    <property type="term" value="P:fatty acid biosynthetic process"/>
    <property type="evidence" value="ECO:0007669"/>
    <property type="project" value="UniProtKB-UniRule"/>
</dbReference>
<dbReference type="GO" id="GO:0009245">
    <property type="term" value="P:lipid A biosynthetic process"/>
    <property type="evidence" value="ECO:0007669"/>
    <property type="project" value="UniProtKB-UniRule"/>
</dbReference>
<dbReference type="CDD" id="cd01288">
    <property type="entry name" value="FabZ"/>
    <property type="match status" value="1"/>
</dbReference>
<dbReference type="FunFam" id="3.10.129.10:FF:000001">
    <property type="entry name" value="3-hydroxyacyl-[acyl-carrier-protein] dehydratase FabZ"/>
    <property type="match status" value="1"/>
</dbReference>
<dbReference type="Gene3D" id="3.10.129.10">
    <property type="entry name" value="Hotdog Thioesterase"/>
    <property type="match status" value="1"/>
</dbReference>
<dbReference type="HAMAP" id="MF_00406">
    <property type="entry name" value="FabZ"/>
    <property type="match status" value="1"/>
</dbReference>
<dbReference type="InterPro" id="IPR013114">
    <property type="entry name" value="FabA_FabZ"/>
</dbReference>
<dbReference type="InterPro" id="IPR010084">
    <property type="entry name" value="FabZ"/>
</dbReference>
<dbReference type="InterPro" id="IPR029069">
    <property type="entry name" value="HotDog_dom_sf"/>
</dbReference>
<dbReference type="NCBIfam" id="TIGR01750">
    <property type="entry name" value="fabZ"/>
    <property type="match status" value="1"/>
</dbReference>
<dbReference type="NCBIfam" id="NF000582">
    <property type="entry name" value="PRK00006.1"/>
    <property type="match status" value="1"/>
</dbReference>
<dbReference type="PANTHER" id="PTHR30272">
    <property type="entry name" value="3-HYDROXYACYL-[ACYL-CARRIER-PROTEIN] DEHYDRATASE"/>
    <property type="match status" value="1"/>
</dbReference>
<dbReference type="PANTHER" id="PTHR30272:SF1">
    <property type="entry name" value="3-HYDROXYACYL-[ACYL-CARRIER-PROTEIN] DEHYDRATASE"/>
    <property type="match status" value="1"/>
</dbReference>
<dbReference type="Pfam" id="PF07977">
    <property type="entry name" value="FabA"/>
    <property type="match status" value="1"/>
</dbReference>
<dbReference type="SUPFAM" id="SSF54637">
    <property type="entry name" value="Thioesterase/thiol ester dehydrase-isomerase"/>
    <property type="match status" value="1"/>
</dbReference>
<evidence type="ECO:0000255" key="1">
    <source>
        <dbReference type="HAMAP-Rule" id="MF_00406"/>
    </source>
</evidence>
<keyword id="KW-0963">Cytoplasm</keyword>
<keyword id="KW-0441">Lipid A biosynthesis</keyword>
<keyword id="KW-0444">Lipid biosynthesis</keyword>
<keyword id="KW-0443">Lipid metabolism</keyword>
<keyword id="KW-0456">Lyase</keyword>
<organism>
    <name type="scientific">Yersinia pseudotuberculosis serotype IB (strain PB1/+)</name>
    <dbReference type="NCBI Taxonomy" id="502801"/>
    <lineage>
        <taxon>Bacteria</taxon>
        <taxon>Pseudomonadati</taxon>
        <taxon>Pseudomonadota</taxon>
        <taxon>Gammaproteobacteria</taxon>
        <taxon>Enterobacterales</taxon>
        <taxon>Yersiniaceae</taxon>
        <taxon>Yersinia</taxon>
    </lineage>
</organism>
<accession>B2JZ23</accession>
<reference key="1">
    <citation type="submission" date="2008-04" db="EMBL/GenBank/DDBJ databases">
        <title>Complete sequence of Yersinia pseudotuberculosis PB1/+.</title>
        <authorList>
            <person name="Copeland A."/>
            <person name="Lucas S."/>
            <person name="Lapidus A."/>
            <person name="Glavina del Rio T."/>
            <person name="Dalin E."/>
            <person name="Tice H."/>
            <person name="Bruce D."/>
            <person name="Goodwin L."/>
            <person name="Pitluck S."/>
            <person name="Munk A.C."/>
            <person name="Brettin T."/>
            <person name="Detter J.C."/>
            <person name="Han C."/>
            <person name="Tapia R."/>
            <person name="Schmutz J."/>
            <person name="Larimer F."/>
            <person name="Land M."/>
            <person name="Hauser L."/>
            <person name="Challacombe J.F."/>
            <person name="Green L."/>
            <person name="Lindler L.E."/>
            <person name="Nikolich M.P."/>
            <person name="Richardson P."/>
        </authorList>
    </citation>
    <scope>NUCLEOTIDE SEQUENCE [LARGE SCALE GENOMIC DNA]</scope>
    <source>
        <strain>PB1/+</strain>
    </source>
</reference>
<feature type="chain" id="PRO_1000197308" description="3-hydroxyacyl-[acyl-carrier-protein] dehydratase FabZ">
    <location>
        <begin position="1"/>
        <end position="176"/>
    </location>
</feature>
<feature type="active site" evidence="1">
    <location>
        <position position="54"/>
    </location>
</feature>
<protein>
    <recommendedName>
        <fullName evidence="1">3-hydroxyacyl-[acyl-carrier-protein] dehydratase FabZ</fullName>
        <ecNumber evidence="1">4.2.1.59</ecNumber>
    </recommendedName>
    <alternativeName>
        <fullName evidence="1">(3R)-hydroxymyristoyl-[acyl-carrier-protein] dehydratase</fullName>
        <shortName evidence="1">(3R)-hydroxymyristoyl-ACP dehydrase</shortName>
    </alternativeName>
    <alternativeName>
        <fullName evidence="1">Beta-hydroxyacyl-ACP dehydratase</fullName>
    </alternativeName>
</protein>
<gene>
    <name evidence="1" type="primary">fabZ</name>
    <name type="ordered locus">YPTS_3112</name>
</gene>
<name>FABZ_YERPB</name>